<accession>Q55FI1</accession>
<comment type="catalytic activity">
    <reaction>
        <text>4-aminobutanoate + 2-oxoglutarate = succinate semialdehyde + L-glutamate</text>
        <dbReference type="Rhea" id="RHEA:23352"/>
        <dbReference type="ChEBI" id="CHEBI:16810"/>
        <dbReference type="ChEBI" id="CHEBI:29985"/>
        <dbReference type="ChEBI" id="CHEBI:57706"/>
        <dbReference type="ChEBI" id="CHEBI:59888"/>
        <dbReference type="EC" id="2.6.1.19"/>
    </reaction>
</comment>
<comment type="cofactor">
    <cofactor evidence="1">
        <name>pyridoxal 5'-phosphate</name>
        <dbReference type="ChEBI" id="CHEBI:597326"/>
    </cofactor>
</comment>
<comment type="subunit">
    <text evidence="1">Homodimer.</text>
</comment>
<comment type="similarity">
    <text evidence="2">Belongs to the class-III pyridoxal-phosphate-dependent aminotransferase family.</text>
</comment>
<gene>
    <name type="primary">gabT</name>
    <name type="ORF">DDB_G0268104</name>
</gene>
<reference key="1">
    <citation type="journal article" date="2005" name="Nature">
        <title>The genome of the social amoeba Dictyostelium discoideum.</title>
        <authorList>
            <person name="Eichinger L."/>
            <person name="Pachebat J.A."/>
            <person name="Gloeckner G."/>
            <person name="Rajandream M.A."/>
            <person name="Sucgang R."/>
            <person name="Berriman M."/>
            <person name="Song J."/>
            <person name="Olsen R."/>
            <person name="Szafranski K."/>
            <person name="Xu Q."/>
            <person name="Tunggal B."/>
            <person name="Kummerfeld S."/>
            <person name="Madera M."/>
            <person name="Konfortov B.A."/>
            <person name="Rivero F."/>
            <person name="Bankier A.T."/>
            <person name="Lehmann R."/>
            <person name="Hamlin N."/>
            <person name="Davies R."/>
            <person name="Gaudet P."/>
            <person name="Fey P."/>
            <person name="Pilcher K."/>
            <person name="Chen G."/>
            <person name="Saunders D."/>
            <person name="Sodergren E.J."/>
            <person name="Davis P."/>
            <person name="Kerhornou A."/>
            <person name="Nie X."/>
            <person name="Hall N."/>
            <person name="Anjard C."/>
            <person name="Hemphill L."/>
            <person name="Bason N."/>
            <person name="Farbrother P."/>
            <person name="Desany B."/>
            <person name="Just E."/>
            <person name="Morio T."/>
            <person name="Rost R."/>
            <person name="Churcher C.M."/>
            <person name="Cooper J."/>
            <person name="Haydock S."/>
            <person name="van Driessche N."/>
            <person name="Cronin A."/>
            <person name="Goodhead I."/>
            <person name="Muzny D.M."/>
            <person name="Mourier T."/>
            <person name="Pain A."/>
            <person name="Lu M."/>
            <person name="Harper D."/>
            <person name="Lindsay R."/>
            <person name="Hauser H."/>
            <person name="James K.D."/>
            <person name="Quiles M."/>
            <person name="Madan Babu M."/>
            <person name="Saito T."/>
            <person name="Buchrieser C."/>
            <person name="Wardroper A."/>
            <person name="Felder M."/>
            <person name="Thangavelu M."/>
            <person name="Johnson D."/>
            <person name="Knights A."/>
            <person name="Loulseged H."/>
            <person name="Mungall K.L."/>
            <person name="Oliver K."/>
            <person name="Price C."/>
            <person name="Quail M.A."/>
            <person name="Urushihara H."/>
            <person name="Hernandez J."/>
            <person name="Rabbinowitsch E."/>
            <person name="Steffen D."/>
            <person name="Sanders M."/>
            <person name="Ma J."/>
            <person name="Kohara Y."/>
            <person name="Sharp S."/>
            <person name="Simmonds M.N."/>
            <person name="Spiegler S."/>
            <person name="Tivey A."/>
            <person name="Sugano S."/>
            <person name="White B."/>
            <person name="Walker D."/>
            <person name="Woodward J.R."/>
            <person name="Winckler T."/>
            <person name="Tanaka Y."/>
            <person name="Shaulsky G."/>
            <person name="Schleicher M."/>
            <person name="Weinstock G.M."/>
            <person name="Rosenthal A."/>
            <person name="Cox E.C."/>
            <person name="Chisholm R.L."/>
            <person name="Gibbs R.A."/>
            <person name="Loomis W.F."/>
            <person name="Platzer M."/>
            <person name="Kay R.R."/>
            <person name="Williams J.G."/>
            <person name="Dear P.H."/>
            <person name="Noegel A.A."/>
            <person name="Barrell B.G."/>
            <person name="Kuspa A."/>
        </authorList>
    </citation>
    <scope>NUCLEOTIDE SEQUENCE [LARGE SCALE GENOMIC DNA]</scope>
    <source>
        <strain>AX4</strain>
    </source>
</reference>
<protein>
    <recommendedName>
        <fullName>4-aminobutyrate aminotransferase</fullName>
        <ecNumber>2.6.1.19</ecNumber>
    </recommendedName>
    <alternativeName>
        <fullName>GABA aminotransferase</fullName>
        <shortName>GABA-AT</shortName>
    </alternativeName>
    <alternativeName>
        <fullName>Gamma-amino-N-butyrate transaminase</fullName>
        <shortName>GABA transaminase</shortName>
    </alternativeName>
</protein>
<keyword id="KW-0032">Aminotransferase</keyword>
<keyword id="KW-0663">Pyridoxal phosphate</keyword>
<keyword id="KW-1185">Reference proteome</keyword>
<keyword id="KW-0808">Transferase</keyword>
<dbReference type="EC" id="2.6.1.19"/>
<dbReference type="EMBL" id="AAFI02000003">
    <property type="protein sequence ID" value="EAL73505.1"/>
    <property type="molecule type" value="Genomic_DNA"/>
</dbReference>
<dbReference type="RefSeq" id="XP_647552.1">
    <property type="nucleotide sequence ID" value="XM_642460.1"/>
</dbReference>
<dbReference type="SMR" id="Q55FI1"/>
<dbReference type="FunCoup" id="Q55FI1">
    <property type="interactions" value="117"/>
</dbReference>
<dbReference type="STRING" id="44689.Q55FI1"/>
<dbReference type="GlyGen" id="Q55FI1">
    <property type="glycosylation" value="1 site"/>
</dbReference>
<dbReference type="PaxDb" id="44689-DDB0231448"/>
<dbReference type="EnsemblProtists" id="EAL73505">
    <property type="protein sequence ID" value="EAL73505"/>
    <property type="gene ID" value="DDB_G0268104"/>
</dbReference>
<dbReference type="GeneID" id="8616360"/>
<dbReference type="KEGG" id="ddi:DDB_G0268104"/>
<dbReference type="dictyBase" id="DDB_G0268104">
    <property type="gene designation" value="gabT"/>
</dbReference>
<dbReference type="VEuPathDB" id="AmoebaDB:DDB_G0268104"/>
<dbReference type="eggNOG" id="KOG1405">
    <property type="taxonomic scope" value="Eukaryota"/>
</dbReference>
<dbReference type="HOGENOM" id="CLU_016922_12_0_1"/>
<dbReference type="InParanoid" id="Q55FI1"/>
<dbReference type="OMA" id="GLMCAFD"/>
<dbReference type="PhylomeDB" id="Q55FI1"/>
<dbReference type="Reactome" id="R-DDI-916853">
    <property type="pathway name" value="Degradation of GABA"/>
</dbReference>
<dbReference type="PRO" id="PR:Q55FI1"/>
<dbReference type="Proteomes" id="UP000002195">
    <property type="component" value="Chromosome 1"/>
</dbReference>
<dbReference type="GO" id="GO:0032144">
    <property type="term" value="C:4-aminobutyrate transaminase complex"/>
    <property type="evidence" value="ECO:0000250"/>
    <property type="project" value="UniProtKB"/>
</dbReference>
<dbReference type="GO" id="GO:0005739">
    <property type="term" value="C:mitochondrion"/>
    <property type="evidence" value="ECO:0000314"/>
    <property type="project" value="dictyBase"/>
</dbReference>
<dbReference type="GO" id="GO:0034386">
    <property type="term" value="F:4-aminobutyrate:2-oxoglutarate transaminase activity"/>
    <property type="evidence" value="ECO:0000250"/>
    <property type="project" value="dictyBase"/>
</dbReference>
<dbReference type="GO" id="GO:0042802">
    <property type="term" value="F:identical protein binding"/>
    <property type="evidence" value="ECO:0000250"/>
    <property type="project" value="UniProtKB"/>
</dbReference>
<dbReference type="GO" id="GO:0030170">
    <property type="term" value="F:pyridoxal phosphate binding"/>
    <property type="evidence" value="ECO:0000250"/>
    <property type="project" value="UniProtKB"/>
</dbReference>
<dbReference type="GO" id="GO:0009450">
    <property type="term" value="P:gamma-aminobutyric acid catabolic process"/>
    <property type="evidence" value="ECO:0000318"/>
    <property type="project" value="GO_Central"/>
</dbReference>
<dbReference type="CDD" id="cd00610">
    <property type="entry name" value="OAT_like"/>
    <property type="match status" value="1"/>
</dbReference>
<dbReference type="FunFam" id="3.40.640.10:FF:000029">
    <property type="entry name" value="4-aminobutyrate aminotransferase, mitochondrial"/>
    <property type="match status" value="1"/>
</dbReference>
<dbReference type="Gene3D" id="3.90.1150.10">
    <property type="entry name" value="Aspartate Aminotransferase, domain 1"/>
    <property type="match status" value="1"/>
</dbReference>
<dbReference type="Gene3D" id="3.40.640.10">
    <property type="entry name" value="Type I PLP-dependent aspartate aminotransferase-like (Major domain)"/>
    <property type="match status" value="1"/>
</dbReference>
<dbReference type="InterPro" id="IPR004631">
    <property type="entry name" value="4NH2But_aminotransferase_euk"/>
</dbReference>
<dbReference type="InterPro" id="IPR005814">
    <property type="entry name" value="Aminotrans_3"/>
</dbReference>
<dbReference type="InterPro" id="IPR049704">
    <property type="entry name" value="Aminotrans_3_PPA_site"/>
</dbReference>
<dbReference type="InterPro" id="IPR015424">
    <property type="entry name" value="PyrdxlP-dep_Trfase"/>
</dbReference>
<dbReference type="InterPro" id="IPR015421">
    <property type="entry name" value="PyrdxlP-dep_Trfase_major"/>
</dbReference>
<dbReference type="InterPro" id="IPR015422">
    <property type="entry name" value="PyrdxlP-dep_Trfase_small"/>
</dbReference>
<dbReference type="NCBIfam" id="TIGR00699">
    <property type="entry name" value="GABAtrns_euk"/>
    <property type="match status" value="1"/>
</dbReference>
<dbReference type="PANTHER" id="PTHR43206:SF1">
    <property type="entry name" value="4-AMINOBUTYRATE AMINOTRANSFERASE, MITOCHONDRIAL"/>
    <property type="match status" value="1"/>
</dbReference>
<dbReference type="PANTHER" id="PTHR43206">
    <property type="entry name" value="AMINOTRANSFERASE"/>
    <property type="match status" value="1"/>
</dbReference>
<dbReference type="Pfam" id="PF00202">
    <property type="entry name" value="Aminotran_3"/>
    <property type="match status" value="1"/>
</dbReference>
<dbReference type="PIRSF" id="PIRSF000521">
    <property type="entry name" value="Transaminase_4ab_Lys_Orn"/>
    <property type="match status" value="1"/>
</dbReference>
<dbReference type="SUPFAM" id="SSF53383">
    <property type="entry name" value="PLP-dependent transferases"/>
    <property type="match status" value="1"/>
</dbReference>
<dbReference type="PROSITE" id="PS00600">
    <property type="entry name" value="AA_TRANSFER_CLASS_3"/>
    <property type="match status" value="1"/>
</dbReference>
<proteinExistence type="inferred from homology"/>
<name>GABT_DICDI</name>
<evidence type="ECO:0000250" key="1">
    <source>
        <dbReference type="UniProtKB" id="P80147"/>
    </source>
</evidence>
<evidence type="ECO:0000305" key="2"/>
<feature type="chain" id="PRO_0000327473" description="4-aminobutyrate aminotransferase">
    <location>
        <begin position="1"/>
        <end position="495"/>
    </location>
</feature>
<feature type="binding site" description="in other chain" evidence="1">
    <location>
        <begin position="160"/>
        <end position="161"/>
    </location>
    <ligand>
        <name>pyridoxal 5'-phosphate</name>
        <dbReference type="ChEBI" id="CHEBI:597326"/>
        <note>ligand shared between dimeric partners</note>
    </ligand>
</feature>
<feature type="binding site" evidence="1">
    <location>
        <position position="216"/>
    </location>
    <ligand>
        <name>substrate</name>
    </ligand>
</feature>
<feature type="binding site" evidence="1">
    <location>
        <position position="374"/>
    </location>
    <ligand>
        <name>pyridoxal 5'-phosphate</name>
        <dbReference type="ChEBI" id="CHEBI:597326"/>
        <note>ligand shared between dimeric partners</note>
    </ligand>
</feature>
<feature type="modified residue" description="N6-(pyridoxal phosphate)lysine" evidence="1">
    <location>
        <position position="350"/>
    </location>
</feature>
<organism>
    <name type="scientific">Dictyostelium discoideum</name>
    <name type="common">Social amoeba</name>
    <dbReference type="NCBI Taxonomy" id="44689"/>
    <lineage>
        <taxon>Eukaryota</taxon>
        <taxon>Amoebozoa</taxon>
        <taxon>Evosea</taxon>
        <taxon>Eumycetozoa</taxon>
        <taxon>Dictyostelia</taxon>
        <taxon>Dictyosteliales</taxon>
        <taxon>Dictyosteliaceae</taxon>
        <taxon>Dictyostelium</taxon>
    </lineage>
</organism>
<sequence>MSSSRLIKCLSSNNYIVRSFSKSSIPTTPTPDFPGEYKEPIVKTQIPGPQSKALIERLNKLQDPRAAHFFADYANSRGNYISDVDGNILLDLYCQIASIPIGYNNPELIKAAKSDRWVSAIINRPSLGVLPPKDWPALIENSFMQVSPKGLNQVFTAMCGSCANECAYKAVFMHYQHVKRGGKPFTPEELSSCMKNQEPGSPSLSILSFKKGFHGRTFGTLSTTRSKAIHKLDIPAFDWPAATFPDLKYPLAEHAKENREIEDRCLQEVEQLIKTWHIPVAGIIVEPIQAEGGDNYATPYFFQGLRDITKKHGVSMIVDEVQTGMGATGKFWAHEHWNLTSPPDIVTFSKKMQAAGFYHNLDYRPSESYRNFNTWMGDPVRALELEVVIGEIKKNHLLDNVVITGNYLKDGLFDIAARYPGLIQNIRGEGTFLAIDFPTPAERDRVISHIRLLGVEMGGCGERSIRFRPMLVCQPSHINQFLNRFDQTMKELYKN</sequence>